<accession>D2WKD9</accession>
<accession>J9HZ43</accession>
<name>SDR1_AEDAE</name>
<protein>
    <recommendedName>
        <fullName evidence="5">Farnesol dehydrogenase</fullName>
        <ecNumber evidence="3">1.1.1.216</ecNumber>
    </recommendedName>
    <alternativeName>
        <fullName evidence="4">NADP(+)-dependent farnesol dehydrogenase 1</fullName>
        <shortName evidence="4">AaSDR-1</shortName>
    </alternativeName>
</protein>
<proteinExistence type="evidence at protein level"/>
<dbReference type="EC" id="1.1.1.216" evidence="3"/>
<dbReference type="EMBL" id="GQ344797">
    <property type="protein sequence ID" value="ADB03639.1"/>
    <property type="molecule type" value="mRNA"/>
</dbReference>
<dbReference type="EMBL" id="CH477512">
    <property type="protein sequence ID" value="EJY57755.1"/>
    <property type="molecule type" value="Genomic_DNA"/>
</dbReference>
<dbReference type="RefSeq" id="XP_011492954.1">
    <property type="nucleotide sequence ID" value="XM_011494652.1"/>
</dbReference>
<dbReference type="SMR" id="D2WKD9"/>
<dbReference type="FunCoup" id="D2WKD9">
    <property type="interactions" value="222"/>
</dbReference>
<dbReference type="STRING" id="7159.D2WKD9"/>
<dbReference type="PaxDb" id="7159-AAEL017302-PA"/>
<dbReference type="GeneID" id="23687722"/>
<dbReference type="KEGG" id="aag:23687722"/>
<dbReference type="VEuPathDB" id="VectorBase:AAEL017302"/>
<dbReference type="eggNOG" id="KOG1205">
    <property type="taxonomic scope" value="Eukaryota"/>
</dbReference>
<dbReference type="HOGENOM" id="CLU_010194_2_10_1"/>
<dbReference type="InParanoid" id="D2WKD9"/>
<dbReference type="OrthoDB" id="1933717at2759"/>
<dbReference type="PhylomeDB" id="D2WKD9"/>
<dbReference type="BioCyc" id="MetaCyc:MONOMER-15957"/>
<dbReference type="BRENDA" id="1.1.1.216">
    <property type="organism ID" value="149"/>
</dbReference>
<dbReference type="Proteomes" id="UP000008820">
    <property type="component" value="Unassembled WGS sequence"/>
</dbReference>
<dbReference type="Proteomes" id="UP000682892">
    <property type="component" value="Chromosome 1"/>
</dbReference>
<dbReference type="GO" id="GO:0047886">
    <property type="term" value="F:farnesol dehydrogenase activity"/>
    <property type="evidence" value="ECO:0000314"/>
    <property type="project" value="UniProtKB"/>
</dbReference>
<dbReference type="GO" id="GO:0006718">
    <property type="term" value="P:juvenile hormone biosynthetic process"/>
    <property type="evidence" value="ECO:0000314"/>
    <property type="project" value="UniProtKB"/>
</dbReference>
<dbReference type="FunFam" id="3.40.50.720:FF:000047">
    <property type="entry name" value="NADP-dependent L-serine/L-allo-threonine dehydrogenase"/>
    <property type="match status" value="1"/>
</dbReference>
<dbReference type="Gene3D" id="3.40.50.720">
    <property type="entry name" value="NAD(P)-binding Rossmann-like Domain"/>
    <property type="match status" value="1"/>
</dbReference>
<dbReference type="InterPro" id="IPR036291">
    <property type="entry name" value="NAD(P)-bd_dom_sf"/>
</dbReference>
<dbReference type="InterPro" id="IPR020904">
    <property type="entry name" value="Sc_DH/Rdtase_CS"/>
</dbReference>
<dbReference type="InterPro" id="IPR002347">
    <property type="entry name" value="SDR_fam"/>
</dbReference>
<dbReference type="PANTHER" id="PTHR43115">
    <property type="entry name" value="DEHYDROGENASE/REDUCTASE SDR FAMILY MEMBER 11"/>
    <property type="match status" value="1"/>
</dbReference>
<dbReference type="PANTHER" id="PTHR43115:SF4">
    <property type="entry name" value="DEHYDROGENASE_REDUCTASE SDR FAMILY MEMBER 11"/>
    <property type="match status" value="1"/>
</dbReference>
<dbReference type="Pfam" id="PF00106">
    <property type="entry name" value="adh_short"/>
    <property type="match status" value="1"/>
</dbReference>
<dbReference type="PRINTS" id="PR00081">
    <property type="entry name" value="GDHRDH"/>
</dbReference>
<dbReference type="PRINTS" id="PR00080">
    <property type="entry name" value="SDRFAMILY"/>
</dbReference>
<dbReference type="SUPFAM" id="SSF51735">
    <property type="entry name" value="NAD(P)-binding Rossmann-fold domains"/>
    <property type="match status" value="1"/>
</dbReference>
<dbReference type="PROSITE" id="PS00061">
    <property type="entry name" value="ADH_SHORT"/>
    <property type="match status" value="1"/>
</dbReference>
<feature type="chain" id="PRO_0000432713" description="Farnesol dehydrogenase">
    <location>
        <begin position="1"/>
        <end position="245"/>
    </location>
</feature>
<feature type="active site" description="Proton acceptor" evidence="1 2">
    <location>
        <position position="160"/>
    </location>
</feature>
<feature type="binding site" evidence="1">
    <location>
        <begin position="11"/>
        <end position="40"/>
    </location>
    <ligand>
        <name>NAD(+)</name>
        <dbReference type="ChEBI" id="CHEBI:57540"/>
    </ligand>
</feature>
<feature type="binding site" evidence="1">
    <location>
        <position position="64"/>
    </location>
    <ligand>
        <name>NAD(+)</name>
        <dbReference type="ChEBI" id="CHEBI:57540"/>
    </ligand>
</feature>
<feature type="binding site" evidence="1">
    <location>
        <position position="145"/>
    </location>
    <ligand>
        <name>substrate</name>
    </ligand>
</feature>
<feature type="binding site" evidence="1">
    <location>
        <position position="164"/>
    </location>
    <ligand>
        <name>NAD(+)</name>
        <dbReference type="ChEBI" id="CHEBI:57540"/>
    </ligand>
</feature>
<feature type="sequence conflict" description="In Ref. 1; ADB03639." evidence="5" ref="1">
    <original>K</original>
    <variation>E</variation>
    <location>
        <position position="80"/>
    </location>
</feature>
<feature type="sequence conflict" description="In Ref. 1; ADB03639." evidence="5" ref="1">
    <original>A</original>
    <variation>S</variation>
    <location>
        <position position="210"/>
    </location>
</feature>
<organism evidence="6">
    <name type="scientific">Aedes aegypti</name>
    <name type="common">Yellowfever mosquito</name>
    <name type="synonym">Culex aegypti</name>
    <dbReference type="NCBI Taxonomy" id="7159"/>
    <lineage>
        <taxon>Eukaryota</taxon>
        <taxon>Metazoa</taxon>
        <taxon>Ecdysozoa</taxon>
        <taxon>Arthropoda</taxon>
        <taxon>Hexapoda</taxon>
        <taxon>Insecta</taxon>
        <taxon>Pterygota</taxon>
        <taxon>Neoptera</taxon>
        <taxon>Endopterygota</taxon>
        <taxon>Diptera</taxon>
        <taxon>Nematocera</taxon>
        <taxon>Culicoidea</taxon>
        <taxon>Culicidae</taxon>
        <taxon>Culicinae</taxon>
        <taxon>Aedini</taxon>
        <taxon>Aedes</taxon>
        <taxon>Stegomyia</taxon>
    </lineage>
</organism>
<sequence length="245" mass="26542">MDRWAGKVAVVTGASSGIGAAITTDLAKAGMVVVGLARRVERVEALKANLPESAKPRLHAVKCDVSKEEDITQVFKWVEKKFGGVDVLVNNAGILRQTDLLGTDNGQMLREVLDTNVMGLVLCSQKAYQSMKKRSVDGHIVHINSVVGHKVFDFPQSNIYPASKHAVTAITETMRNELRNAGSRIKVTSISPGVVRTEILPESIIEGGHALLESEDISEAVLYVLGTPPRVQVHELTIKPVGEKF</sequence>
<reference key="1">
    <citation type="journal article" date="2009" name="Proc. Natl. Acad. Sci. U.S.A.">
        <title>NADP+-dependent farnesol dehydrogenase, a corpora allata enzyme involved in juvenile hormone synthesis.</title>
        <authorList>
            <person name="Mayoral J.G."/>
            <person name="Nouzova M."/>
            <person name="Navare A."/>
            <person name="Noriega F.G."/>
        </authorList>
    </citation>
    <scope>NUCLEOTIDE SEQUENCE [MRNA]</scope>
    <scope>FUNCTION</scope>
    <scope>CATALYTIC ACTIVITY</scope>
    <scope>SUBUNIT</scope>
    <scope>BIOPHYSICOCHEMICAL PROPERTIES</scope>
    <scope>TISSUE SPECIFICITY</scope>
</reference>
<reference key="2">
    <citation type="journal article" date="2007" name="Science">
        <title>Genome sequence of Aedes aegypti, a major arbovirus vector.</title>
        <authorList>
            <person name="Nene V."/>
            <person name="Wortman J.R."/>
            <person name="Lawson D."/>
            <person name="Haas B.J."/>
            <person name="Kodira C.D."/>
            <person name="Tu Z.J."/>
            <person name="Loftus B.J."/>
            <person name="Xi Z."/>
            <person name="Megy K."/>
            <person name="Grabherr M."/>
            <person name="Ren Q."/>
            <person name="Zdobnov E.M."/>
            <person name="Lobo N.F."/>
            <person name="Campbell K.S."/>
            <person name="Brown S.E."/>
            <person name="Bonaldo M.F."/>
            <person name="Zhu J."/>
            <person name="Sinkins S.P."/>
            <person name="Hogenkamp D.G."/>
            <person name="Amedeo P."/>
            <person name="Arensburger P."/>
            <person name="Atkinson P.W."/>
            <person name="Bidwell S.L."/>
            <person name="Biedler J."/>
            <person name="Birney E."/>
            <person name="Bruggner R.V."/>
            <person name="Costas J."/>
            <person name="Coy M.R."/>
            <person name="Crabtree J."/>
            <person name="Crawford M."/>
            <person name="DeBruyn B."/>
            <person name="DeCaprio D."/>
            <person name="Eiglmeier K."/>
            <person name="Eisenstadt E."/>
            <person name="El-Dorry H."/>
            <person name="Gelbart W.M."/>
            <person name="Gomes S.L."/>
            <person name="Hammond M."/>
            <person name="Hannick L.I."/>
            <person name="Hogan J.R."/>
            <person name="Holmes M.H."/>
            <person name="Jaffe D."/>
            <person name="Johnston S.J."/>
            <person name="Kennedy R.C."/>
            <person name="Koo H."/>
            <person name="Kravitz S."/>
            <person name="Kriventseva E.V."/>
            <person name="Kulp D."/>
            <person name="Labutti K."/>
            <person name="Lee E."/>
            <person name="Li S."/>
            <person name="Lovin D.D."/>
            <person name="Mao C."/>
            <person name="Mauceli E."/>
            <person name="Menck C.F."/>
            <person name="Miller J.R."/>
            <person name="Montgomery P."/>
            <person name="Mori A."/>
            <person name="Nascimento A.L."/>
            <person name="Naveira H.F."/>
            <person name="Nusbaum C."/>
            <person name="O'Leary S.B."/>
            <person name="Orvis J."/>
            <person name="Pertea M."/>
            <person name="Quesneville H."/>
            <person name="Reidenbach K.R."/>
            <person name="Rogers Y.-H.C."/>
            <person name="Roth C.W."/>
            <person name="Schneider J.R."/>
            <person name="Schatz M."/>
            <person name="Shumway M."/>
            <person name="Stanke M."/>
            <person name="Stinson E.O."/>
            <person name="Tubio J.M.C."/>
            <person name="Vanzee J.P."/>
            <person name="Verjovski-Almeida S."/>
            <person name="Werner D."/>
            <person name="White O.R."/>
            <person name="Wyder S."/>
            <person name="Zeng Q."/>
            <person name="Zhao Q."/>
            <person name="Zhao Y."/>
            <person name="Hill C.A."/>
            <person name="Raikhel A.S."/>
            <person name="Soares M.B."/>
            <person name="Knudson D.L."/>
            <person name="Lee N.H."/>
            <person name="Galagan J."/>
            <person name="Salzberg S.L."/>
            <person name="Paulsen I.T."/>
            <person name="Dimopoulos G."/>
            <person name="Collins F.H."/>
            <person name="Bruce B."/>
            <person name="Fraser-Liggett C.M."/>
            <person name="Severson D.W."/>
        </authorList>
    </citation>
    <scope>NUCLEOTIDE SEQUENCE [LARGE SCALE GENOMIC DNA]</scope>
    <source>
        <strain>LVPib12</strain>
    </source>
</reference>
<comment type="function">
    <text evidence="3">Mediates oxidation of farnesol into farnesal, a precursor of juvenile hormone in the corpora allata (CA), the glands that synthesize juvenile hormone. Able to oxidize C(10) to C(15) isoprenoid and aliphatic alcohols.</text>
</comment>
<comment type="catalytic activity">
    <reaction evidence="3">
        <text>(2E,6E)-farnesol + NADP(+) = (2E,6E)-farnesal + NADPH + H(+)</text>
        <dbReference type="Rhea" id="RHEA:14697"/>
        <dbReference type="ChEBI" id="CHEBI:15378"/>
        <dbReference type="ChEBI" id="CHEBI:15894"/>
        <dbReference type="ChEBI" id="CHEBI:16619"/>
        <dbReference type="ChEBI" id="CHEBI:57783"/>
        <dbReference type="ChEBI" id="CHEBI:58349"/>
        <dbReference type="EC" id="1.1.1.216"/>
    </reaction>
</comment>
<comment type="biophysicochemical properties">
    <kinetics>
        <KM evidence="3">91 uM for (E,E) farnesol</KM>
        <KM evidence="3">97 uM for (Z,Z) farnesol</KM>
        <KM evidence="3">184 uM for 2-decanol</KM>
        <KM evidence="3">208 uM for geraniol (E)</KM>
        <KM evidence="3">109 uM for nerol (Z)</KM>
        <KM evidence="3">133 uM for citronellol</KM>
        <KM evidence="3">195 uM for octanol</KM>
    </kinetics>
    <phDependence>
        <text evidence="3">Optimum pH is 10-11.</text>
    </phDependence>
</comment>
<comment type="subunit">
    <text evidence="3">Homodimer.</text>
</comment>
<comment type="tissue specificity">
    <text evidence="3">Highly expressed level in the midgut and brain in adult females, and at lower level in the abdominal and thoracic ganglia. High levels are detected in corpora allata (CA), Malpighian tubules and fat body.</text>
</comment>
<comment type="similarity">
    <text evidence="5">Belongs to the short-chain dehydrogenases/reductases (SDR) family.</text>
</comment>
<keyword id="KW-0520">NAD</keyword>
<keyword id="KW-0521">NADP</keyword>
<keyword id="KW-0560">Oxidoreductase</keyword>
<keyword id="KW-1185">Reference proteome</keyword>
<gene>
    <name evidence="4" type="primary">SDR-1</name>
    <name evidence="6" type="synonym">FOHSDR-1</name>
    <name evidence="7" type="ORF">AaeL_AAEL017302</name>
</gene>
<evidence type="ECO:0000250" key="1">
    <source>
        <dbReference type="UniProtKB" id="P00334"/>
    </source>
</evidence>
<evidence type="ECO:0000255" key="2">
    <source>
        <dbReference type="PROSITE-ProRule" id="PRU10001"/>
    </source>
</evidence>
<evidence type="ECO:0000269" key="3">
    <source>
    </source>
</evidence>
<evidence type="ECO:0000303" key="4">
    <source>
    </source>
</evidence>
<evidence type="ECO:0000305" key="5"/>
<evidence type="ECO:0000312" key="6">
    <source>
        <dbReference type="EMBL" id="ADB03639.1"/>
    </source>
</evidence>
<evidence type="ECO:0000312" key="7">
    <source>
        <dbReference type="EMBL" id="EJY57755.1"/>
    </source>
</evidence>